<gene>
    <name evidence="1" type="primary">erpA</name>
    <name type="ordered locus">Pcryo_0044</name>
</gene>
<sequence>MNQPANQFNPSSSQPVDPTVLNLTDSAAQKVRRLREEEGDSNLMLRVYVTGGGCSGFSYGFNFANELNEDDANFDNNDVTLVVDSLSYQYLQGSTVDYTEGLEGARFIVTNPNATTTCGCGSSFSI</sequence>
<keyword id="KW-0408">Iron</keyword>
<keyword id="KW-0411">Iron-sulfur</keyword>
<keyword id="KW-0479">Metal-binding</keyword>
<name>ERPA_PSYCK</name>
<protein>
    <recommendedName>
        <fullName evidence="1">Iron-sulfur cluster insertion protein ErpA</fullName>
    </recommendedName>
</protein>
<accession>Q1QES5</accession>
<reference key="1">
    <citation type="submission" date="2006-03" db="EMBL/GenBank/DDBJ databases">
        <title>Complete sequence of chromosome of Psychrobacter cryohalolentis K5.</title>
        <authorList>
            <consortium name="US DOE Joint Genome Institute"/>
            <person name="Copeland A."/>
            <person name="Lucas S."/>
            <person name="Lapidus A."/>
            <person name="Barry K."/>
            <person name="Detter J.C."/>
            <person name="Glavina T."/>
            <person name="Hammon N."/>
            <person name="Israni S."/>
            <person name="Dalin E."/>
            <person name="Tice H."/>
            <person name="Pitluck S."/>
            <person name="Brettin T."/>
            <person name="Bruce D."/>
            <person name="Han C."/>
            <person name="Tapia R."/>
            <person name="Sims D.R."/>
            <person name="Gilna P."/>
            <person name="Schmutz J."/>
            <person name="Larimer F."/>
            <person name="Land M."/>
            <person name="Hauser L."/>
            <person name="Kyrpides N."/>
            <person name="Kim E."/>
            <person name="Richardson P."/>
        </authorList>
    </citation>
    <scope>NUCLEOTIDE SEQUENCE [LARGE SCALE GENOMIC DNA]</scope>
    <source>
        <strain>ATCC BAA-1226 / DSM 17306 / VKM B-2378 / K5</strain>
    </source>
</reference>
<evidence type="ECO:0000255" key="1">
    <source>
        <dbReference type="HAMAP-Rule" id="MF_01380"/>
    </source>
</evidence>
<evidence type="ECO:0000256" key="2">
    <source>
        <dbReference type="SAM" id="MobiDB-lite"/>
    </source>
</evidence>
<dbReference type="EMBL" id="CP000323">
    <property type="protein sequence ID" value="ABE73828.1"/>
    <property type="molecule type" value="Genomic_DNA"/>
</dbReference>
<dbReference type="RefSeq" id="WP_011279349.1">
    <property type="nucleotide sequence ID" value="NC_007969.1"/>
</dbReference>
<dbReference type="SMR" id="Q1QES5"/>
<dbReference type="STRING" id="335284.Pcryo_0044"/>
<dbReference type="KEGG" id="pcr:Pcryo_0044"/>
<dbReference type="eggNOG" id="COG0316">
    <property type="taxonomic scope" value="Bacteria"/>
</dbReference>
<dbReference type="HOGENOM" id="CLU_069054_5_3_6"/>
<dbReference type="Proteomes" id="UP000002425">
    <property type="component" value="Chromosome"/>
</dbReference>
<dbReference type="GO" id="GO:0051537">
    <property type="term" value="F:2 iron, 2 sulfur cluster binding"/>
    <property type="evidence" value="ECO:0007669"/>
    <property type="project" value="TreeGrafter"/>
</dbReference>
<dbReference type="GO" id="GO:0051539">
    <property type="term" value="F:4 iron, 4 sulfur cluster binding"/>
    <property type="evidence" value="ECO:0007669"/>
    <property type="project" value="TreeGrafter"/>
</dbReference>
<dbReference type="GO" id="GO:0005506">
    <property type="term" value="F:iron ion binding"/>
    <property type="evidence" value="ECO:0007669"/>
    <property type="project" value="UniProtKB-UniRule"/>
</dbReference>
<dbReference type="GO" id="GO:0016226">
    <property type="term" value="P:iron-sulfur cluster assembly"/>
    <property type="evidence" value="ECO:0007669"/>
    <property type="project" value="UniProtKB-UniRule"/>
</dbReference>
<dbReference type="FunFam" id="2.60.300.12:FF:000002">
    <property type="entry name" value="Iron-sulfur cluster insertion protein ErpA"/>
    <property type="match status" value="1"/>
</dbReference>
<dbReference type="Gene3D" id="2.60.300.12">
    <property type="entry name" value="HesB-like domain"/>
    <property type="match status" value="1"/>
</dbReference>
<dbReference type="HAMAP" id="MF_01380">
    <property type="entry name" value="Fe_S_insert_ErpA"/>
    <property type="match status" value="1"/>
</dbReference>
<dbReference type="InterPro" id="IPR000361">
    <property type="entry name" value="FeS_biogenesis"/>
</dbReference>
<dbReference type="InterPro" id="IPR016092">
    <property type="entry name" value="FeS_cluster_insertion"/>
</dbReference>
<dbReference type="InterPro" id="IPR017870">
    <property type="entry name" value="FeS_cluster_insertion_CS"/>
</dbReference>
<dbReference type="InterPro" id="IPR023063">
    <property type="entry name" value="FeS_cluster_insertion_RrpA"/>
</dbReference>
<dbReference type="InterPro" id="IPR035903">
    <property type="entry name" value="HesB-like_dom_sf"/>
</dbReference>
<dbReference type="NCBIfam" id="TIGR00049">
    <property type="entry name" value="iron-sulfur cluster assembly accessory protein"/>
    <property type="match status" value="1"/>
</dbReference>
<dbReference type="NCBIfam" id="NF010147">
    <property type="entry name" value="PRK13623.1"/>
    <property type="match status" value="1"/>
</dbReference>
<dbReference type="PANTHER" id="PTHR43011">
    <property type="entry name" value="IRON-SULFUR CLUSTER ASSEMBLY 2 HOMOLOG, MITOCHONDRIAL"/>
    <property type="match status" value="1"/>
</dbReference>
<dbReference type="PANTHER" id="PTHR43011:SF1">
    <property type="entry name" value="IRON-SULFUR CLUSTER ASSEMBLY 2 HOMOLOG, MITOCHONDRIAL"/>
    <property type="match status" value="1"/>
</dbReference>
<dbReference type="Pfam" id="PF01521">
    <property type="entry name" value="Fe-S_biosyn"/>
    <property type="match status" value="1"/>
</dbReference>
<dbReference type="SUPFAM" id="SSF89360">
    <property type="entry name" value="HesB-like domain"/>
    <property type="match status" value="1"/>
</dbReference>
<dbReference type="PROSITE" id="PS01152">
    <property type="entry name" value="HESB"/>
    <property type="match status" value="1"/>
</dbReference>
<feature type="chain" id="PRO_0000311534" description="Iron-sulfur cluster insertion protein ErpA">
    <location>
        <begin position="1"/>
        <end position="126"/>
    </location>
</feature>
<feature type="region of interest" description="Disordered" evidence="2">
    <location>
        <begin position="1"/>
        <end position="21"/>
    </location>
</feature>
<feature type="binding site" evidence="1">
    <location>
        <position position="54"/>
    </location>
    <ligand>
        <name>iron-sulfur cluster</name>
        <dbReference type="ChEBI" id="CHEBI:30408"/>
    </ligand>
</feature>
<feature type="binding site" evidence="1">
    <location>
        <position position="118"/>
    </location>
    <ligand>
        <name>iron-sulfur cluster</name>
        <dbReference type="ChEBI" id="CHEBI:30408"/>
    </ligand>
</feature>
<feature type="binding site" evidence="1">
    <location>
        <position position="120"/>
    </location>
    <ligand>
        <name>iron-sulfur cluster</name>
        <dbReference type="ChEBI" id="CHEBI:30408"/>
    </ligand>
</feature>
<proteinExistence type="inferred from homology"/>
<organism>
    <name type="scientific">Psychrobacter cryohalolentis (strain ATCC BAA-1226 / DSM 17306 / VKM B-2378 / K5)</name>
    <dbReference type="NCBI Taxonomy" id="335284"/>
    <lineage>
        <taxon>Bacteria</taxon>
        <taxon>Pseudomonadati</taxon>
        <taxon>Pseudomonadota</taxon>
        <taxon>Gammaproteobacteria</taxon>
        <taxon>Moraxellales</taxon>
        <taxon>Moraxellaceae</taxon>
        <taxon>Psychrobacter</taxon>
    </lineage>
</organism>
<comment type="function">
    <text evidence="1">Required for insertion of 4Fe-4S clusters for at least IspG.</text>
</comment>
<comment type="cofactor">
    <cofactor evidence="1">
        <name>iron-sulfur cluster</name>
        <dbReference type="ChEBI" id="CHEBI:30408"/>
    </cofactor>
    <text evidence="1">Binds 1 iron-sulfur cluster per subunit.</text>
</comment>
<comment type="subunit">
    <text evidence="1">Homodimer.</text>
</comment>
<comment type="similarity">
    <text evidence="1">Belongs to the HesB/IscA family.</text>
</comment>